<dbReference type="EMBL" id="AM040264">
    <property type="protein sequence ID" value="CAJ10240.1"/>
    <property type="molecule type" value="Genomic_DNA"/>
</dbReference>
<dbReference type="RefSeq" id="WP_002965533.1">
    <property type="nucleotide sequence ID" value="NZ_KN046823.1"/>
</dbReference>
<dbReference type="STRING" id="359391.BAB1_0284"/>
<dbReference type="KEGG" id="bmf:BAB1_0284"/>
<dbReference type="PATRIC" id="fig|359391.11.peg.1703"/>
<dbReference type="HOGENOM" id="CLU_112904_0_0_5"/>
<dbReference type="PhylomeDB" id="Q2YPB9"/>
<dbReference type="Proteomes" id="UP000002719">
    <property type="component" value="Chromosome I"/>
</dbReference>
<dbReference type="HAMAP" id="MF_00678">
    <property type="entry name" value="UPF0262"/>
    <property type="match status" value="1"/>
</dbReference>
<dbReference type="InterPro" id="IPR008321">
    <property type="entry name" value="UCP032146"/>
</dbReference>
<dbReference type="NCBIfam" id="NF002769">
    <property type="entry name" value="PRK02853.1"/>
    <property type="match status" value="1"/>
</dbReference>
<dbReference type="Pfam" id="PF06793">
    <property type="entry name" value="UPF0262"/>
    <property type="match status" value="1"/>
</dbReference>
<dbReference type="PIRSF" id="PIRSF032146">
    <property type="entry name" value="UCP032146"/>
    <property type="match status" value="1"/>
</dbReference>
<name>Y284_BRUA2</name>
<sequence length="160" mass="18129">MTADVPNARLVDVELDESIGRSTPDVEHERAVAIFDLIEENSFHPVGDQKGGPYRLKLSLMESRLIFSITRENGDAVATHILSLTPLRRVVRDYFMICESYYQAIRSATPSKIEAIDMGRRGLHNEGSQTLQARLKGKIEVDFDTARRLFTLVCVLHWRG</sequence>
<accession>Q2YPB9</accession>
<gene>
    <name type="ordered locus">BAB1_0284</name>
</gene>
<feature type="chain" id="PRO_0000314192" description="UPF0262 protein BAB1_0284">
    <location>
        <begin position="1"/>
        <end position="160"/>
    </location>
</feature>
<organism>
    <name type="scientific">Brucella abortus (strain 2308)</name>
    <dbReference type="NCBI Taxonomy" id="359391"/>
    <lineage>
        <taxon>Bacteria</taxon>
        <taxon>Pseudomonadati</taxon>
        <taxon>Pseudomonadota</taxon>
        <taxon>Alphaproteobacteria</taxon>
        <taxon>Hyphomicrobiales</taxon>
        <taxon>Brucellaceae</taxon>
        <taxon>Brucella/Ochrobactrum group</taxon>
        <taxon>Brucella</taxon>
    </lineage>
</organism>
<keyword id="KW-1185">Reference proteome</keyword>
<proteinExistence type="inferred from homology"/>
<protein>
    <recommendedName>
        <fullName evidence="1">UPF0262 protein BAB1_0284</fullName>
    </recommendedName>
</protein>
<evidence type="ECO:0000255" key="1">
    <source>
        <dbReference type="HAMAP-Rule" id="MF_00678"/>
    </source>
</evidence>
<reference key="1">
    <citation type="journal article" date="2005" name="Infect. Immun.">
        <title>Whole-genome analyses of speciation events in pathogenic Brucellae.</title>
        <authorList>
            <person name="Chain P.S."/>
            <person name="Comerci D.J."/>
            <person name="Tolmasky M.E."/>
            <person name="Larimer F.W."/>
            <person name="Malfatti S.A."/>
            <person name="Vergez L.M."/>
            <person name="Aguero F."/>
            <person name="Land M.L."/>
            <person name="Ugalde R.A."/>
            <person name="Garcia E."/>
        </authorList>
    </citation>
    <scope>NUCLEOTIDE SEQUENCE [LARGE SCALE GENOMIC DNA]</scope>
    <source>
        <strain>2308</strain>
    </source>
</reference>
<comment type="similarity">
    <text evidence="1">Belongs to the UPF0262 family.</text>
</comment>